<keyword id="KW-1003">Cell membrane</keyword>
<keyword id="KW-0200">Cytadherence</keyword>
<keyword id="KW-0472">Membrane</keyword>
<keyword id="KW-1185">Reference proteome</keyword>
<keyword id="KW-0732">Signal</keyword>
<keyword id="KW-0812">Transmembrane</keyword>
<keyword id="KW-1133">Transmembrane helix</keyword>
<comment type="function">
    <text evidence="1">Could be involved in cytadherence.</text>
</comment>
<comment type="subcellular location">
    <subcellularLocation>
        <location evidence="4">Cell membrane</location>
        <topology evidence="4">Single-pass type I membrane protein</topology>
    </subcellularLocation>
</comment>
<comment type="similarity">
    <text evidence="4">Belongs to the adhesin P1 family.</text>
</comment>
<sequence>MKKLIFKLSVGITPLALIGLGSFGLAVSGAKPNNLKPVNQVGEMNSQGQSNLLEKARRWRNSNFTSLSIDGTNPGALVLTGSKSISRIDLYGNVIWTFDPGNTNDLTGKVGFYDANNRLTAFSGDVPFNVSDLSSKTVVEATQDQEDPNVFYLLLIPDAAVQQEQKTKDQVFENYFMSDAPATGDTSAEGSATPAGGGSSSSAAGGGAVAPAAASSTARLVEEGNSAGMGTMTPTASTSETVIDYNSDQNKIPKPKTLLDSSESSESINGGRTYANINTQNNLQGVIVKVNENLFNSENPFAVENMAFIKPKDMVDNYPSTWTQGSANGKMTNVLQFYKHDNPNAVNNRFYRAKYYPKRLETQTTTPLIDSSFSPYEHPEWYEDNQFVMPWMQYITNLGGLYAKDGMVYLFGGNGTWVNNESALSIGVFRTKFENRTAEAPGNTKTVGYPYGILLSAISFDATRNGLALAPASLGQDVGYHFVPRLAVGGVSSPRGANGNIFLGSAITWGTNGGNFLDTKWHSPAVIEDAPTTFVTVNSSGALQNSGNPQPTSTPMPNSNGNESIPYRWTNSYDYNSVRFAALISKPAGGNTKQVESLFTTALKLDTLNSLPNKFTQENNIFFSYAMLDGRQWSLGTRKDSAWLTTNTINNFTYNTQQQLASTVAGENANPRNILNALTTAKGFDRRDIGNVVYTYSNNTNKFTYYYQVGGAITTWPEVQVNYKTSANITYYNLTRTDFGSTTPATQDANTVSSKLNGAYLSSTGDQQGWYNGSIYVKKASFTPSSQGYTWQDFKGLTTTASNAVISNWTKAGYSIRPDDDTVFNVSKIPFEKEITAAVNVRSLDSYYVQLNGETSVNTVARVSPDSSALALNPNRITNPLMNRDNVIGQGAFISRNDIPSSFFENKINDIVTTEADGKEVLDSKYINSIYRYTPPQNNPDIRLRLLVIDRSRATNDFIKLLPQVLVDGEYVAVPQANSVFVSDQEFTGFDALPGYVLPVAISIPIIIIALALALGLGIGIPMSQNRKMLKQGFAISNKKVDILTTAVGSVFKQIINRTSVTNIKKTPQMLQANKKDGASSPSKPSAPAAKKPAGPTKPSAPGAKPTAPAKPKAPAPTKKIE</sequence>
<gene>
    <name type="primary">gapA</name>
    <name type="ordered locus">MYCGA1800</name>
    <name type="ORF">MGA_0934</name>
</gene>
<name>ADP2_MYCGA</name>
<feature type="signal peptide" evidence="2">
    <location>
        <begin position="1"/>
        <end position="26"/>
    </location>
</feature>
<feature type="chain" id="PRO_0000020630" description="Adhesin P1">
    <location>
        <begin position="27"/>
        <end position="1122"/>
    </location>
</feature>
<feature type="transmembrane region" description="Helical" evidence="2">
    <location>
        <begin position="1001"/>
        <end position="1021"/>
    </location>
</feature>
<feature type="region of interest" description="Disordered" evidence="3">
    <location>
        <begin position="182"/>
        <end position="208"/>
    </location>
</feature>
<feature type="region of interest" description="Disordered" evidence="3">
    <location>
        <begin position="244"/>
        <end position="273"/>
    </location>
</feature>
<feature type="region of interest" description="Disordered" evidence="3">
    <location>
        <begin position="541"/>
        <end position="562"/>
    </location>
</feature>
<feature type="region of interest" description="Disordered" evidence="3">
    <location>
        <begin position="1066"/>
        <end position="1122"/>
    </location>
</feature>
<feature type="compositionally biased region" description="Gly residues" evidence="3">
    <location>
        <begin position="195"/>
        <end position="208"/>
    </location>
</feature>
<feature type="compositionally biased region" description="Polar residues" evidence="3">
    <location>
        <begin position="259"/>
        <end position="273"/>
    </location>
</feature>
<feature type="compositionally biased region" description="Low complexity" evidence="3">
    <location>
        <begin position="1079"/>
        <end position="1122"/>
    </location>
</feature>
<feature type="sequence conflict" description="In Ref. 2; AAF25381." evidence="4" ref="2">
    <original>F</original>
    <variation>C</variation>
    <location>
        <position position="337"/>
    </location>
</feature>
<feature type="sequence conflict" description="In Ref. 2; AAF25381." evidence="4" ref="2">
    <original>T</original>
    <variation>A</variation>
    <location>
        <position position="645"/>
    </location>
</feature>
<feature type="sequence conflict" description="In Ref. 2; AAF25381." evidence="4" ref="2">
    <original>V</original>
    <variation>A</variation>
    <location>
        <position position="826"/>
    </location>
</feature>
<reference key="1">
    <citation type="journal article" date="2003" name="Microbiology">
        <title>The complete genome sequence of the avian pathogen Mycoplasma gallisepticum strain R(low).</title>
        <authorList>
            <person name="Papazisi L."/>
            <person name="Gorton T.S."/>
            <person name="Kutish G."/>
            <person name="Markham P.F."/>
            <person name="Browning G.F."/>
            <person name="Nguyen D.K."/>
            <person name="Swartzell S."/>
            <person name="Madan A."/>
            <person name="Mahairas G."/>
            <person name="Geary S.J."/>
        </authorList>
    </citation>
    <scope>NUCLEOTIDE SEQUENCE [LARGE SCALE GENOMIC DNA]</scope>
    <source>
        <strain>R(low / passage 15 / clone 2)</strain>
    </source>
</reference>
<reference key="2">
    <citation type="journal article" date="2000" name="Infect. Immun.">
        <title>Analysis of cytadherence-deficient, GapA-negative Mycoplasma gallisepticum strain R.</title>
        <authorList>
            <person name="Papazisi L."/>
            <person name="Troy K.E."/>
            <person name="Gorton T.S."/>
            <person name="Liao X."/>
            <person name="Geary S.J."/>
        </authorList>
    </citation>
    <scope>NUCLEOTIDE SEQUENCE [GENOMIC DNA] OF 94-1122</scope>
    <source>
        <strain>R(low)</strain>
    </source>
</reference>
<dbReference type="EMBL" id="AE015450">
    <property type="protein sequence ID" value="AAP56530.2"/>
    <property type="molecule type" value="Genomic_DNA"/>
</dbReference>
<dbReference type="EMBL" id="AF214004">
    <property type="protein sequence ID" value="AAF25381.1"/>
    <property type="molecule type" value="Genomic_DNA"/>
</dbReference>
<dbReference type="RefSeq" id="WP_011113412.1">
    <property type="nucleotide sequence ID" value="NC_004829.2"/>
</dbReference>
<dbReference type="SMR" id="Q9REM8"/>
<dbReference type="KEGG" id="mga:MGA_0934"/>
<dbReference type="PATRIC" id="fig|233150.7.peg.197"/>
<dbReference type="HOGENOM" id="CLU_279639_0_0_14"/>
<dbReference type="OrthoDB" id="397662at2"/>
<dbReference type="Proteomes" id="UP000001418">
    <property type="component" value="Chromosome"/>
</dbReference>
<dbReference type="GO" id="GO:0005886">
    <property type="term" value="C:plasma membrane"/>
    <property type="evidence" value="ECO:0007669"/>
    <property type="project" value="UniProtKB-SubCell"/>
</dbReference>
<dbReference type="GO" id="GO:0020035">
    <property type="term" value="P:adhesion of symbiont to microvasculature"/>
    <property type="evidence" value="ECO:0007669"/>
    <property type="project" value="UniProtKB-KW"/>
</dbReference>
<dbReference type="InterPro" id="IPR022400">
    <property type="entry name" value="Adhesin_P1"/>
</dbReference>
<dbReference type="InterPro" id="IPR022116">
    <property type="entry name" value="P1_N"/>
</dbReference>
<dbReference type="NCBIfam" id="TIGR03839">
    <property type="entry name" value="termin_org_P1"/>
    <property type="match status" value="1"/>
</dbReference>
<dbReference type="Pfam" id="PF12378">
    <property type="entry name" value="P1_N"/>
    <property type="match status" value="1"/>
</dbReference>
<organism>
    <name type="scientific">Mycoplasmoides gallisepticum (strain R(low / passage 15 / clone 2))</name>
    <name type="common">Mycoplasma gallisepticum</name>
    <dbReference type="NCBI Taxonomy" id="710127"/>
    <lineage>
        <taxon>Bacteria</taxon>
        <taxon>Bacillati</taxon>
        <taxon>Mycoplasmatota</taxon>
        <taxon>Mycoplasmoidales</taxon>
        <taxon>Mycoplasmoidaceae</taxon>
        <taxon>Mycoplasmoides</taxon>
    </lineage>
</organism>
<proteinExistence type="inferred from homology"/>
<evidence type="ECO:0000250" key="1"/>
<evidence type="ECO:0000255" key="2"/>
<evidence type="ECO:0000256" key="3">
    <source>
        <dbReference type="SAM" id="MobiDB-lite"/>
    </source>
</evidence>
<evidence type="ECO:0000305" key="4"/>
<protein>
    <recommendedName>
        <fullName>Adhesin P1</fullName>
    </recommendedName>
    <alternativeName>
        <fullName>Adherence protein A</fullName>
    </alternativeName>
    <alternativeName>
        <fullName>Attachment protein</fullName>
    </alternativeName>
    <alternativeName>
        <fullName>Cytadhesin P1</fullName>
    </alternativeName>
</protein>
<accession>Q9REM8</accession>